<proteinExistence type="evidence at transcript level"/>
<reference key="1">
    <citation type="journal article" date="2013" name="Nature">
        <title>The zebrafish reference genome sequence and its relationship to the human genome.</title>
        <authorList>
            <person name="Howe K."/>
            <person name="Clark M.D."/>
            <person name="Torroja C.F."/>
            <person name="Torrance J."/>
            <person name="Berthelot C."/>
            <person name="Muffato M."/>
            <person name="Collins J.E."/>
            <person name="Humphray S."/>
            <person name="McLaren K."/>
            <person name="Matthews L."/>
            <person name="McLaren S."/>
            <person name="Sealy I."/>
            <person name="Caccamo M."/>
            <person name="Churcher C."/>
            <person name="Scott C."/>
            <person name="Barrett J.C."/>
            <person name="Koch R."/>
            <person name="Rauch G.J."/>
            <person name="White S."/>
            <person name="Chow W."/>
            <person name="Kilian B."/>
            <person name="Quintais L.T."/>
            <person name="Guerra-Assuncao J.A."/>
            <person name="Zhou Y."/>
            <person name="Gu Y."/>
            <person name="Yen J."/>
            <person name="Vogel J.H."/>
            <person name="Eyre T."/>
            <person name="Redmond S."/>
            <person name="Banerjee R."/>
            <person name="Chi J."/>
            <person name="Fu B."/>
            <person name="Langley E."/>
            <person name="Maguire S.F."/>
            <person name="Laird G.K."/>
            <person name="Lloyd D."/>
            <person name="Kenyon E."/>
            <person name="Donaldson S."/>
            <person name="Sehra H."/>
            <person name="Almeida-King J."/>
            <person name="Loveland J."/>
            <person name="Trevanion S."/>
            <person name="Jones M."/>
            <person name="Quail M."/>
            <person name="Willey D."/>
            <person name="Hunt A."/>
            <person name="Burton J."/>
            <person name="Sims S."/>
            <person name="McLay K."/>
            <person name="Plumb B."/>
            <person name="Davis J."/>
            <person name="Clee C."/>
            <person name="Oliver K."/>
            <person name="Clark R."/>
            <person name="Riddle C."/>
            <person name="Elliot D."/>
            <person name="Threadgold G."/>
            <person name="Harden G."/>
            <person name="Ware D."/>
            <person name="Begum S."/>
            <person name="Mortimore B."/>
            <person name="Kerry G."/>
            <person name="Heath P."/>
            <person name="Phillimore B."/>
            <person name="Tracey A."/>
            <person name="Corby N."/>
            <person name="Dunn M."/>
            <person name="Johnson C."/>
            <person name="Wood J."/>
            <person name="Clark S."/>
            <person name="Pelan S."/>
            <person name="Griffiths G."/>
            <person name="Smith M."/>
            <person name="Glithero R."/>
            <person name="Howden P."/>
            <person name="Barker N."/>
            <person name="Lloyd C."/>
            <person name="Stevens C."/>
            <person name="Harley J."/>
            <person name="Holt K."/>
            <person name="Panagiotidis G."/>
            <person name="Lovell J."/>
            <person name="Beasley H."/>
            <person name="Henderson C."/>
            <person name="Gordon D."/>
            <person name="Auger K."/>
            <person name="Wright D."/>
            <person name="Collins J."/>
            <person name="Raisen C."/>
            <person name="Dyer L."/>
            <person name="Leung K."/>
            <person name="Robertson L."/>
            <person name="Ambridge K."/>
            <person name="Leongamornlert D."/>
            <person name="McGuire S."/>
            <person name="Gilderthorp R."/>
            <person name="Griffiths C."/>
            <person name="Manthravadi D."/>
            <person name="Nichol S."/>
            <person name="Barker G."/>
            <person name="Whitehead S."/>
            <person name="Kay M."/>
            <person name="Brown J."/>
            <person name="Murnane C."/>
            <person name="Gray E."/>
            <person name="Humphries M."/>
            <person name="Sycamore N."/>
            <person name="Barker D."/>
            <person name="Saunders D."/>
            <person name="Wallis J."/>
            <person name="Babbage A."/>
            <person name="Hammond S."/>
            <person name="Mashreghi-Mohammadi M."/>
            <person name="Barr L."/>
            <person name="Martin S."/>
            <person name="Wray P."/>
            <person name="Ellington A."/>
            <person name="Matthews N."/>
            <person name="Ellwood M."/>
            <person name="Woodmansey R."/>
            <person name="Clark G."/>
            <person name="Cooper J."/>
            <person name="Tromans A."/>
            <person name="Grafham D."/>
            <person name="Skuce C."/>
            <person name="Pandian R."/>
            <person name="Andrews R."/>
            <person name="Harrison E."/>
            <person name="Kimberley A."/>
            <person name="Garnett J."/>
            <person name="Fosker N."/>
            <person name="Hall R."/>
            <person name="Garner P."/>
            <person name="Kelly D."/>
            <person name="Bird C."/>
            <person name="Palmer S."/>
            <person name="Gehring I."/>
            <person name="Berger A."/>
            <person name="Dooley C.M."/>
            <person name="Ersan-Urun Z."/>
            <person name="Eser C."/>
            <person name="Geiger H."/>
            <person name="Geisler M."/>
            <person name="Karotki L."/>
            <person name="Kirn A."/>
            <person name="Konantz J."/>
            <person name="Konantz M."/>
            <person name="Oberlander M."/>
            <person name="Rudolph-Geiger S."/>
            <person name="Teucke M."/>
            <person name="Lanz C."/>
            <person name="Raddatz G."/>
            <person name="Osoegawa K."/>
            <person name="Zhu B."/>
            <person name="Rapp A."/>
            <person name="Widaa S."/>
            <person name="Langford C."/>
            <person name="Yang F."/>
            <person name="Schuster S.C."/>
            <person name="Carter N.P."/>
            <person name="Harrow J."/>
            <person name="Ning Z."/>
            <person name="Herrero J."/>
            <person name="Searle S.M."/>
            <person name="Enright A."/>
            <person name="Geisler R."/>
            <person name="Plasterk R.H."/>
            <person name="Lee C."/>
            <person name="Westerfield M."/>
            <person name="de Jong P.J."/>
            <person name="Zon L.I."/>
            <person name="Postlethwait J.H."/>
            <person name="Nusslein-Volhard C."/>
            <person name="Hubbard T.J."/>
            <person name="Roest Crollius H."/>
            <person name="Rogers J."/>
            <person name="Stemple D.L."/>
        </authorList>
    </citation>
    <scope>NUCLEOTIDE SEQUENCE [LARGE SCALE GENOMIC DNA]</scope>
    <source>
        <strain>Tuebingen</strain>
    </source>
</reference>
<reference key="2">
    <citation type="submission" date="2003-02" db="EMBL/GenBank/DDBJ databases">
        <authorList>
            <consortium name="NIH - Zebrafish Gene Collection (ZGC) project"/>
        </authorList>
    </citation>
    <scope>NUCLEOTIDE SEQUENCE [LARGE SCALE MRNA]</scope>
    <source>
        <strain>AB</strain>
    </source>
</reference>
<accession>Q802W2</accession>
<accession>A2AWD6</accession>
<evidence type="ECO:0000250" key="1">
    <source>
        <dbReference type="UniProtKB" id="P49189"/>
    </source>
</evidence>
<evidence type="ECO:0000250" key="2">
    <source>
        <dbReference type="UniProtKB" id="P56533"/>
    </source>
</evidence>
<evidence type="ECO:0000250" key="3">
    <source>
        <dbReference type="UniProtKB" id="Q9JLJ3"/>
    </source>
</evidence>
<evidence type="ECO:0000255" key="4">
    <source>
        <dbReference type="PROSITE-ProRule" id="PRU10007"/>
    </source>
</evidence>
<evidence type="ECO:0000255" key="5">
    <source>
        <dbReference type="PROSITE-ProRule" id="PRU10008"/>
    </source>
</evidence>
<evidence type="ECO:0000305" key="6"/>
<name>A9A1B_DANRE</name>
<protein>
    <recommendedName>
        <fullName>4-trimethylaminobutyraldehyde dehydrogenase B</fullName>
        <shortName>TMABA-DH</shortName>
        <shortName>TMABADH</shortName>
        <ecNumber evidence="1">1.2.1.47</ecNumber>
    </recommendedName>
    <alternativeName>
        <fullName>Aldehyde dehydrogenase family 9 member A1-B</fullName>
        <ecNumber evidence="1">1.2.1.3</ecNumber>
    </alternativeName>
</protein>
<comment type="function">
    <text evidence="1">Converts gamma-trimethylaminobutyraldehyde into gamma-butyrobetaine with high efficiency (in vitro). Can catalyze the irreversible oxidation of a broad range of aldehydes to the corresponding acids in an NAD-dependent reaction, but with low efficiency.</text>
</comment>
<comment type="catalytic activity">
    <reaction evidence="1">
        <text>4-(trimethylamino)butanal + NAD(+) + H2O = 4-(trimethylamino)butanoate + NADH + 2 H(+)</text>
        <dbReference type="Rhea" id="RHEA:17985"/>
        <dbReference type="ChEBI" id="CHEBI:15377"/>
        <dbReference type="ChEBI" id="CHEBI:15378"/>
        <dbReference type="ChEBI" id="CHEBI:16244"/>
        <dbReference type="ChEBI" id="CHEBI:18020"/>
        <dbReference type="ChEBI" id="CHEBI:57540"/>
        <dbReference type="ChEBI" id="CHEBI:57945"/>
        <dbReference type="EC" id="1.2.1.47"/>
    </reaction>
</comment>
<comment type="catalytic activity">
    <reaction evidence="1">
        <text>an aldehyde + NAD(+) + H2O = a carboxylate + NADH + 2 H(+)</text>
        <dbReference type="Rhea" id="RHEA:16185"/>
        <dbReference type="ChEBI" id="CHEBI:15377"/>
        <dbReference type="ChEBI" id="CHEBI:15378"/>
        <dbReference type="ChEBI" id="CHEBI:17478"/>
        <dbReference type="ChEBI" id="CHEBI:29067"/>
        <dbReference type="ChEBI" id="CHEBI:57540"/>
        <dbReference type="ChEBI" id="CHEBI:57945"/>
        <dbReference type="EC" id="1.2.1.3"/>
    </reaction>
</comment>
<comment type="pathway">
    <text evidence="1">Amine and polyamine biosynthesis; carnitine biosynthesis.</text>
</comment>
<comment type="subunit">
    <text evidence="1">Homotetramer.</text>
</comment>
<comment type="subcellular location">
    <subcellularLocation>
        <location evidence="3">Cytoplasm</location>
        <location evidence="3">Cytosol</location>
    </subcellularLocation>
</comment>
<comment type="similarity">
    <text evidence="6">Belongs to the aldehyde dehydrogenase family.</text>
</comment>
<feature type="chain" id="PRO_0000300625" description="4-trimethylaminobutyraldehyde dehydrogenase B">
    <location>
        <begin position="1"/>
        <end position="518"/>
    </location>
</feature>
<feature type="active site" description="Proton acceptor" evidence="4">
    <location>
        <position position="278"/>
    </location>
</feature>
<feature type="active site" description="Nucleophile" evidence="5">
    <location>
        <position position="312"/>
    </location>
</feature>
<feature type="binding site" evidence="2">
    <location>
        <position position="204"/>
    </location>
    <ligand>
        <name>NAD(+)</name>
        <dbReference type="ChEBI" id="CHEBI:57540"/>
    </ligand>
</feature>
<feature type="binding site" evidence="2">
    <location>
        <begin position="256"/>
        <end position="260"/>
    </location>
    <ligand>
        <name>NAD(+)</name>
        <dbReference type="ChEBI" id="CHEBI:57540"/>
    </ligand>
</feature>
<feature type="binding site" evidence="2">
    <location>
        <position position="415"/>
    </location>
    <ligand>
        <name>NAD(+)</name>
        <dbReference type="ChEBI" id="CHEBI:57540"/>
    </ligand>
</feature>
<feature type="sequence conflict" description="In Ref. 2; AAH47176." evidence="6" ref="2">
    <original>HPW</original>
    <variation>NPG</variation>
    <location>
        <begin position="18"/>
        <end position="20"/>
    </location>
</feature>
<feature type="sequence conflict" description="In Ref. 2; AAH47176." evidence="6" ref="2">
    <original>A</original>
    <variation>V</variation>
    <location>
        <position position="84"/>
    </location>
</feature>
<feature type="sequence conflict" description="In Ref. 2; AAH47176." evidence="6" ref="2">
    <original>K</original>
    <variation>T</variation>
    <location>
        <position position="87"/>
    </location>
</feature>
<feature type="sequence conflict" description="In Ref. 2; AAH47176." evidence="6" ref="2">
    <original>L</original>
    <variation>M</variation>
    <location>
        <position position="102"/>
    </location>
</feature>
<feature type="sequence conflict" description="In Ref. 2; AAH47176." evidence="6" ref="2">
    <original>S</original>
    <variation>C</variation>
    <location>
        <position position="140"/>
    </location>
</feature>
<feature type="sequence conflict" description="In Ref. 2; AAH47176." evidence="6" ref="2">
    <original>R</original>
    <variation>H</variation>
    <location>
        <position position="167"/>
    </location>
</feature>
<feature type="sequence conflict" description="In Ref. 2; AAH47176." evidence="6" ref="2">
    <original>E</original>
    <variation>D</variation>
    <location>
        <position position="227"/>
    </location>
</feature>
<feature type="sequence conflict" description="In Ref. 2; AAH47176." evidence="6" ref="2">
    <original>G</original>
    <variation>R</variation>
    <location>
        <position position="342"/>
    </location>
</feature>
<organism>
    <name type="scientific">Danio rerio</name>
    <name type="common">Zebrafish</name>
    <name type="synonym">Brachydanio rerio</name>
    <dbReference type="NCBI Taxonomy" id="7955"/>
    <lineage>
        <taxon>Eukaryota</taxon>
        <taxon>Metazoa</taxon>
        <taxon>Chordata</taxon>
        <taxon>Craniata</taxon>
        <taxon>Vertebrata</taxon>
        <taxon>Euteleostomi</taxon>
        <taxon>Actinopterygii</taxon>
        <taxon>Neopterygii</taxon>
        <taxon>Teleostei</taxon>
        <taxon>Ostariophysi</taxon>
        <taxon>Cypriniformes</taxon>
        <taxon>Danionidae</taxon>
        <taxon>Danioninae</taxon>
        <taxon>Danio</taxon>
    </lineage>
</organism>
<keyword id="KW-0963">Cytoplasm</keyword>
<keyword id="KW-0520">NAD</keyword>
<keyword id="KW-0560">Oxidoreductase</keyword>
<keyword id="KW-1185">Reference proteome</keyword>
<gene>
    <name type="primary">aldh9a1b</name>
    <name type="synonym">aldh9a1</name>
    <name type="ORF">si:ch211-284b7.5</name>
</gene>
<sequence length="518" mass="56438">MALMRCLLPPGFYRTLYHPWTRCASSGTLQIKDPLNFWCGARVDLKDVKTKSEPVFEPATGRVLCRLQTCGSAEVDAAVRNASAAFKVWRKLSGMERARVMLEAARLIEKRREEIAEMEVINNGKSITEARLDVDSARLSIEYFAGQATTLSGQHVQLPGGSFAYTRREPFGVCVGIGAWNYPFQIAAWKSAPAIACGNSMVFKPSPLTPVTAVLLAEIYRQAGAPEGLFNVVQGGQETGSLLCLHPSVEKVSFTGSVPTGKKIMEMASRGVKAVTLELGGKSPLIIFEDTDLENAVRGALMANFLSQGQVCSNGTRVFVQSSIVPQFLKEVVRRTKAISIGDPLLDETRMGALVSKAHLDKVLRYVEQAKNEGAQVLCGGEPFSPADPKLKDGYYMTPCVLDSCTDDMTCVKEEIFGPVMSVLTFDTEDEVLRRANDSDLGLAAGVFTKDVKRAHRVIENLQAGSCFINNYNITPVEVPFGGFKASGIGRENGQVTIEFYSQLKTVVVEMGDVDSLF</sequence>
<dbReference type="EC" id="1.2.1.47" evidence="1"/>
<dbReference type="EC" id="1.2.1.3" evidence="1"/>
<dbReference type="EMBL" id="AL954171">
    <property type="protein sequence ID" value="CAM14219.1"/>
    <property type="molecule type" value="Genomic_DNA"/>
</dbReference>
<dbReference type="EMBL" id="BC047176">
    <property type="protein sequence ID" value="AAH47176.1"/>
    <property type="molecule type" value="mRNA"/>
</dbReference>
<dbReference type="RefSeq" id="NP_958916.1">
    <property type="nucleotide sequence ID" value="NM_201508.1"/>
</dbReference>
<dbReference type="RefSeq" id="XP_005163288.1">
    <property type="nucleotide sequence ID" value="XM_005163231.5"/>
</dbReference>
<dbReference type="SMR" id="Q802W2"/>
<dbReference type="FunCoup" id="Q802W2">
    <property type="interactions" value="175"/>
</dbReference>
<dbReference type="STRING" id="7955.ENSDARP00000053867"/>
<dbReference type="PaxDb" id="7955-ENSDARP00000053867"/>
<dbReference type="Ensembl" id="ENSDART00000053868">
    <property type="protein sequence ID" value="ENSDARP00000053867"/>
    <property type="gene ID" value="ENSDARG00000037061"/>
</dbReference>
<dbReference type="GeneID" id="399481"/>
<dbReference type="KEGG" id="dre:399481"/>
<dbReference type="AGR" id="ZFIN:ZDB-GENE-040120-5"/>
<dbReference type="CTD" id="399481"/>
<dbReference type="ZFIN" id="ZDB-GENE-040120-5">
    <property type="gene designation" value="aldh9a1b"/>
</dbReference>
<dbReference type="eggNOG" id="KOG2450">
    <property type="taxonomic scope" value="Eukaryota"/>
</dbReference>
<dbReference type="HOGENOM" id="CLU_005391_0_0_1"/>
<dbReference type="InParanoid" id="Q802W2"/>
<dbReference type="OMA" id="KHVMFDN"/>
<dbReference type="OrthoDB" id="310895at2759"/>
<dbReference type="PhylomeDB" id="Q802W2"/>
<dbReference type="TreeFam" id="TF314257"/>
<dbReference type="UniPathway" id="UPA00118"/>
<dbReference type="PRO" id="PR:Q802W2"/>
<dbReference type="Proteomes" id="UP000000437">
    <property type="component" value="Chromosome 2"/>
</dbReference>
<dbReference type="Bgee" id="ENSDARG00000037061">
    <property type="expression patterns" value="Expressed in liver and 30 other cell types or tissues"/>
</dbReference>
<dbReference type="ExpressionAtlas" id="Q802W2">
    <property type="expression patterns" value="baseline and differential"/>
</dbReference>
<dbReference type="GO" id="GO:0005829">
    <property type="term" value="C:cytosol"/>
    <property type="evidence" value="ECO:0007669"/>
    <property type="project" value="UniProtKB-SubCell"/>
</dbReference>
<dbReference type="GO" id="GO:0047105">
    <property type="term" value="F:4-trimethylammoniobutyraldehyde dehydrogenase activity"/>
    <property type="evidence" value="ECO:0000250"/>
    <property type="project" value="UniProtKB"/>
</dbReference>
<dbReference type="GO" id="GO:0019145">
    <property type="term" value="F:aminobutyraldehyde dehydrogenase (NAD+) activity"/>
    <property type="evidence" value="ECO:0000318"/>
    <property type="project" value="GO_Central"/>
</dbReference>
<dbReference type="GO" id="GO:0006081">
    <property type="term" value="P:aldehyde metabolic process"/>
    <property type="evidence" value="ECO:0000250"/>
    <property type="project" value="UniProtKB"/>
</dbReference>
<dbReference type="GO" id="GO:0045329">
    <property type="term" value="P:carnitine biosynthetic process"/>
    <property type="evidence" value="ECO:0007669"/>
    <property type="project" value="UniProtKB-UniPathway"/>
</dbReference>
<dbReference type="GO" id="GO:0051289">
    <property type="term" value="P:protein homotetramerization"/>
    <property type="evidence" value="ECO:0000250"/>
    <property type="project" value="UniProtKB"/>
</dbReference>
<dbReference type="CDD" id="cd07090">
    <property type="entry name" value="ALDH_F9_TMBADH"/>
    <property type="match status" value="1"/>
</dbReference>
<dbReference type="FunFam" id="3.40.309.10:FF:000019">
    <property type="entry name" value="4-trimethylaminobutyraldehyde dehydrogenase isoform X1"/>
    <property type="match status" value="1"/>
</dbReference>
<dbReference type="FunFam" id="3.40.605.10:FF:000016">
    <property type="entry name" value="4-trimethylaminobutyraldehyde dehydrogenase isoform X1"/>
    <property type="match status" value="1"/>
</dbReference>
<dbReference type="Gene3D" id="3.40.605.10">
    <property type="entry name" value="Aldehyde Dehydrogenase, Chain A, domain 1"/>
    <property type="match status" value="1"/>
</dbReference>
<dbReference type="Gene3D" id="3.40.309.10">
    <property type="entry name" value="Aldehyde Dehydrogenase, Chain A, domain 2"/>
    <property type="match status" value="1"/>
</dbReference>
<dbReference type="InterPro" id="IPR016161">
    <property type="entry name" value="Ald_DH/histidinol_DH"/>
</dbReference>
<dbReference type="InterPro" id="IPR016163">
    <property type="entry name" value="Ald_DH_C"/>
</dbReference>
<dbReference type="InterPro" id="IPR016160">
    <property type="entry name" value="Ald_DH_CS_CYS"/>
</dbReference>
<dbReference type="InterPro" id="IPR029510">
    <property type="entry name" value="Ald_DH_CS_GLU"/>
</dbReference>
<dbReference type="InterPro" id="IPR016162">
    <property type="entry name" value="Ald_DH_N"/>
</dbReference>
<dbReference type="InterPro" id="IPR015590">
    <property type="entry name" value="Aldehyde_DH_dom"/>
</dbReference>
<dbReference type="NCBIfam" id="NF009725">
    <property type="entry name" value="PRK13252.1"/>
    <property type="match status" value="1"/>
</dbReference>
<dbReference type="PANTHER" id="PTHR11699">
    <property type="entry name" value="ALDEHYDE DEHYDROGENASE-RELATED"/>
    <property type="match status" value="1"/>
</dbReference>
<dbReference type="Pfam" id="PF00171">
    <property type="entry name" value="Aldedh"/>
    <property type="match status" value="1"/>
</dbReference>
<dbReference type="SUPFAM" id="SSF53720">
    <property type="entry name" value="ALDH-like"/>
    <property type="match status" value="1"/>
</dbReference>
<dbReference type="PROSITE" id="PS00070">
    <property type="entry name" value="ALDEHYDE_DEHYDR_CYS"/>
    <property type="match status" value="1"/>
</dbReference>
<dbReference type="PROSITE" id="PS00687">
    <property type="entry name" value="ALDEHYDE_DEHYDR_GLU"/>
    <property type="match status" value="1"/>
</dbReference>